<proteinExistence type="evidence at protein level"/>
<protein>
    <recommendedName>
        <fullName>Large ribosomal subunit protein eL37</fullName>
    </recommendedName>
    <alternativeName>
        <fullName>60S ribosomal protein L37</fullName>
    </alternativeName>
</protein>
<feature type="chain" id="PRO_0000460127" description="Large ribosomal subunit protein eL37">
    <location>
        <begin position="1"/>
        <end position="97"/>
    </location>
</feature>
<feature type="zinc finger region" description="C4-type" evidence="2">
    <location>
        <begin position="19"/>
        <end position="37"/>
    </location>
</feature>
<feature type="binding site" evidence="5 12 20 32">
    <location>
        <position position="19"/>
    </location>
    <ligand>
        <name>Zn(2+)</name>
        <dbReference type="ChEBI" id="CHEBI:29105"/>
    </ligand>
</feature>
<feature type="binding site" evidence="5 12 20 32">
    <location>
        <position position="22"/>
    </location>
    <ligand>
        <name>Zn(2+)</name>
        <dbReference type="ChEBI" id="CHEBI:29105"/>
    </ligand>
</feature>
<feature type="binding site" evidence="5 12 20 32">
    <location>
        <position position="34"/>
    </location>
    <ligand>
        <name>Zn(2+)</name>
        <dbReference type="ChEBI" id="CHEBI:29105"/>
    </ligand>
</feature>
<feature type="binding site" evidence="5 12 20 32">
    <location>
        <position position="37"/>
    </location>
    <ligand>
        <name>Zn(2+)</name>
        <dbReference type="ChEBI" id="CHEBI:29105"/>
    </ligand>
</feature>
<feature type="modified residue" description="N6-acetyllysine" evidence="1">
    <location>
        <position position="10"/>
    </location>
</feature>
<feature type="modified residue" description="Phosphoserine" evidence="1">
    <location>
        <position position="96"/>
    </location>
</feature>
<feature type="modified residue" description="Phosphoserine" evidence="1">
    <location>
        <position position="97"/>
    </location>
</feature>
<comment type="function">
    <text evidence="3 4 8">Component of the large ribosomal subunit (PubMed:26245381, PubMed:27863242, PubMed:30517857). The ribosome is a large ribonucleoprotein complex responsible for the synthesis of proteins in the cell (PubMed:26245381, PubMed:27863242, PubMed:30517857).</text>
</comment>
<comment type="subunit">
    <text evidence="3 4 5 6 7 8 9 10 11 12 13 14 15">Component of the large ribosomal subunit.</text>
</comment>
<comment type="subcellular location">
    <subcellularLocation>
        <location evidence="3 4 5 6 7 8 9 10 11 12 13 14 15">Cytoplasm</location>
    </subcellularLocation>
</comment>
<comment type="similarity">
    <text evidence="16">Belongs to the eukaryotic ribosomal protein eL37 family.</text>
</comment>
<gene>
    <name type="primary">RPL37</name>
</gene>
<reference key="1">
    <citation type="journal article" date="2011" name="Nature">
        <title>A high-resolution map of human evolutionary constraint using 29 mammals.</title>
        <authorList>
            <person name="Lindblad-Toh K."/>
            <person name="Garber M."/>
            <person name="Zuk O."/>
            <person name="Lin M.F."/>
            <person name="Parker B.J."/>
            <person name="Washietl S."/>
            <person name="Kheradpour P."/>
            <person name="Ernst J."/>
            <person name="Jordan G."/>
            <person name="Mauceli E."/>
            <person name="Ward L.D."/>
            <person name="Lowe C.B."/>
            <person name="Holloway A.K."/>
            <person name="Clamp M."/>
            <person name="Gnerre S."/>
            <person name="Alfoldi J."/>
            <person name="Beal K."/>
            <person name="Chang J."/>
            <person name="Clawson H."/>
            <person name="Cuff J."/>
            <person name="Di Palma F."/>
            <person name="Fitzgerald S."/>
            <person name="Flicek P."/>
            <person name="Guttman M."/>
            <person name="Hubisz M.J."/>
            <person name="Jaffe D.B."/>
            <person name="Jungreis I."/>
            <person name="Kent W.J."/>
            <person name="Kostka D."/>
            <person name="Lara M."/>
            <person name="Martins A.L."/>
            <person name="Massingham T."/>
            <person name="Moltke I."/>
            <person name="Raney B.J."/>
            <person name="Rasmussen M.D."/>
            <person name="Robinson J."/>
            <person name="Stark A."/>
            <person name="Vilella A.J."/>
            <person name="Wen J."/>
            <person name="Xie X."/>
            <person name="Zody M.C."/>
            <person name="Baldwin J."/>
            <person name="Bloom T."/>
            <person name="Chin C.W."/>
            <person name="Heiman D."/>
            <person name="Nicol R."/>
            <person name="Nusbaum C."/>
            <person name="Young S."/>
            <person name="Wilkinson J."/>
            <person name="Worley K.C."/>
            <person name="Kovar C.L."/>
            <person name="Muzny D.M."/>
            <person name="Gibbs R.A."/>
            <person name="Cree A."/>
            <person name="Dihn H.H."/>
            <person name="Fowler G."/>
            <person name="Jhangiani S."/>
            <person name="Joshi V."/>
            <person name="Lee S."/>
            <person name="Lewis L.R."/>
            <person name="Nazareth L.V."/>
            <person name="Okwuonu G."/>
            <person name="Santibanez J."/>
            <person name="Warren W.C."/>
            <person name="Mardis E.R."/>
            <person name="Weinstock G.M."/>
            <person name="Wilson R.K."/>
            <person name="Delehaunty K."/>
            <person name="Dooling D."/>
            <person name="Fronik C."/>
            <person name="Fulton L."/>
            <person name="Fulton B."/>
            <person name="Graves T."/>
            <person name="Minx P."/>
            <person name="Sodergren E."/>
            <person name="Birney E."/>
            <person name="Margulies E.H."/>
            <person name="Herrero J."/>
            <person name="Green E.D."/>
            <person name="Haussler D."/>
            <person name="Siepel A."/>
            <person name="Goldman N."/>
            <person name="Pollard K.S."/>
            <person name="Pedersen J.S."/>
            <person name="Lander E.S."/>
            <person name="Kellis M."/>
        </authorList>
    </citation>
    <scope>NUCLEOTIDE SEQUENCE [LARGE SCALE GENOMIC DNA]</scope>
    <source>
        <strain>Thorbecke</strain>
    </source>
</reference>
<reference evidence="17 18" key="2">
    <citation type="journal article" date="2015" name="Nature">
        <title>Structural basis for stop codon recognition in eukaryotes.</title>
        <authorList>
            <person name="Brown A."/>
            <person name="Shao S."/>
            <person name="Murray J."/>
            <person name="Hegde R.S."/>
            <person name="Ramakrishnan V."/>
        </authorList>
    </citation>
    <scope>STRUCTURE BY ELECTRON MICROSCOPY (3.45 ANGSTROMS) OF RIBOSOME</scope>
    <scope>FUNCTION</scope>
    <scope>SUBUNIT</scope>
    <scope>SUBCELLULAR LOCATION</scope>
</reference>
<reference evidence="19" key="3">
    <citation type="journal article" date="2016" name="Cell">
        <title>Decoding mammalian ribosome-mRNA states by translational GTPase complexes.</title>
        <authorList>
            <person name="Shao S."/>
            <person name="Murray J."/>
            <person name="Brown A."/>
            <person name="Taunton J."/>
            <person name="Ramakrishnan V."/>
            <person name="Hegde R.S."/>
        </authorList>
    </citation>
    <scope>STRUCTURE BY ELECTRON MICROSCOPY (3.31 ANGSTROMS) OF RIBOSOME</scope>
    <scope>FUNCTION</scope>
    <scope>SUBCELLULAR LOCATION</scope>
    <scope>SUBUNIT</scope>
</reference>
<reference evidence="23" key="4">
    <citation type="journal article" date="2018" name="Cell Rep.">
        <title>tRNA translocation by the eukaryotic 80S ribosome and the impact of GTP hydrolysis.</title>
        <authorList>
            <person name="Flis J."/>
            <person name="Holm M."/>
            <person name="Rundlet E.J."/>
            <person name="Loerke J."/>
            <person name="Hilal T."/>
            <person name="Dabrowski M."/>
            <person name="Burger J."/>
            <person name="Mielke T."/>
            <person name="Blanchard S.C."/>
            <person name="Spahn C.M.T."/>
            <person name="Budkevich T.V."/>
        </authorList>
    </citation>
    <scope>STRUCTURE BY ELECTRON MICROSCOPY (3.60 ANGSTROMS) OF RIBOSOME</scope>
    <scope>FUNCTION</scope>
    <scope>SUBCELLULAR LOCATION</scope>
    <scope>SUBUNIT</scope>
</reference>
<reference evidence="20" key="5">
    <citation type="journal article" date="2018" name="Elife">
        <title>Dual tRNA mimicry in the Cricket paralysis virus IRES uncovers an unexpected similarity with the Hepatitis C Virus IRES.</title>
        <authorList>
            <person name="Pisareva V.P."/>
            <person name="Pisarev A.V."/>
            <person name="Fernandez I.S."/>
        </authorList>
    </citation>
    <scope>STRUCTURE BY ELECTRON MICROSCOPY (3.20 ANGSTROMS) IN COMPLEX WITH ZINC AND RIBOSOME</scope>
    <scope>SUBUNIT</scope>
    <scope>SUBCELLULAR LOCATION</scope>
</reference>
<reference evidence="26 27" key="6">
    <citation type="journal article" date="2018" name="Elife">
        <title>Structures of translationally inactive mammalian ribosomes.</title>
        <authorList>
            <person name="Brown A."/>
            <person name="Baird M.R."/>
            <person name="Yip M.C."/>
            <person name="Murray J."/>
            <person name="Shao S."/>
        </authorList>
    </citation>
    <scope>STRUCTURE BY ELECTRON MICROSCOPY (3.30 ANGSTROMS) OF RIBOSOME</scope>
    <scope>SUBCELLULAR LOCATION</scope>
    <scope>SUBUNIT</scope>
</reference>
<reference evidence="24 25" key="7">
    <citation type="journal article" date="2018" name="Mol. Cell">
        <title>ZNF598 is a quality control sensor of collided ribosomes.</title>
        <authorList>
            <person name="Juszkiewicz S."/>
            <person name="Chandrasekaran V."/>
            <person name="Lin Z."/>
            <person name="Kraatz S."/>
            <person name="Ramakrishnan V."/>
            <person name="Hegde R.S."/>
        </authorList>
    </citation>
    <scope>STRUCTURE BY ELECTRON MICROSCOPY (3.80 ANGSTROMS) OF RIBOSOME</scope>
    <scope>SUBCELLULAR LOCATION</scope>
    <scope>SUBUNIT</scope>
</reference>
<reference evidence="28 29" key="8">
    <citation type="journal article" date="2019" name="Elife">
        <title>Structural and mutational analysis of the ribosome-arresting human XBP1u.</title>
        <authorList>
            <person name="Shanmuganathan V."/>
            <person name="Schiller N."/>
            <person name="Magoulopoulou A."/>
            <person name="Cheng J."/>
            <person name="Braunger K."/>
            <person name="Cymer F."/>
            <person name="Berninghausen O."/>
            <person name="Beatrix B."/>
            <person name="Kohno K."/>
            <person name="von Heijne G."/>
            <person name="Beckmann R."/>
        </authorList>
    </citation>
    <scope>STRUCTURE BY ELECTRON MICROSCOPY (3.00 ANGSTROMS) OF RIBOSOME</scope>
    <scope>SUBCELLULAR LOCATION</scope>
    <scope>SUBUNIT</scope>
</reference>
<reference evidence="21 22" key="9">
    <citation type="journal article" date="2019" name="EMBO J.">
        <title>The Israeli acute paralysis virus IRES captures host ribosomes by mimicking a ribosomal state with hybrid tRNAs.</title>
        <authorList>
            <person name="Acosta-Reyes F."/>
            <person name="Neupane R."/>
            <person name="Frank J."/>
            <person name="Fernandez I.S."/>
        </authorList>
    </citation>
    <scope>STRUCTURE BY ELECTRON MICROSCOPY (3.10 ANGSTROMS) OF RIBOSOME</scope>
    <scope>SUBUNIT</scope>
    <scope>SUBCELLULAR LOCATION</scope>
</reference>
<reference evidence="30" key="10">
    <citation type="journal article" date="2019" name="Nat. Struct. Mol. Biol.">
        <title>Mechanism of ribosome stalling during translation of a poly(A) tail.</title>
        <authorList>
            <person name="Chandrasekaran V."/>
            <person name="Juszkiewicz S."/>
            <person name="Choi J."/>
            <person name="Puglisi J.D."/>
            <person name="Brown A."/>
            <person name="Shao S."/>
            <person name="Ramakrishnan V."/>
            <person name="Hegde R.S."/>
        </authorList>
    </citation>
    <scope>STRUCTURE BY ELECTRON MICROSCOPY (2.80 ANGSTROMS) OF RIBOSOME</scope>
    <scope>SUBCELLULAR LOCATION</scope>
    <scope>SUBUNIT</scope>
</reference>
<reference evidence="31 32" key="11">
    <citation type="journal article" date="2020" name="Cell Rep.">
        <title>The Halastavi arva virus intergenic region IRES promotes translation by the simplest possible initiation mechanism.</title>
        <authorList>
            <person name="Abaeva I.S."/>
            <person name="Vicens Q."/>
            <person name="Bochler A."/>
            <person name="Soufari H."/>
            <person name="Simonetti A."/>
            <person name="Pestova T.V."/>
            <person name="Hashem Y."/>
            <person name="Hellen C.U.T."/>
        </authorList>
    </citation>
    <scope>STRUCTURE BY ELECTRON MICROSCOPY (3.49 ANGSTROMS) IN COMPLEX WITH ZINC AND RIBOSOME</scope>
    <scope>SUBCELLULAR LOCATION</scope>
    <scope>SUBUNIT</scope>
</reference>
<reference evidence="34 35" key="12">
    <citation type="journal article" date="2022" name="Mol. Cell">
        <title>Direct epitranscriptomic regulation of mammalian translation initiation through N4-acetylcytidine.</title>
        <authorList>
            <person name="Arango D."/>
            <person name="Sturgill D."/>
            <person name="Yang R."/>
            <person name="Kanai T."/>
            <person name="Bauer P."/>
            <person name="Roy J."/>
            <person name="Wang Z."/>
            <person name="Hosogane M."/>
            <person name="Schiffers S."/>
            <person name="Oberdoerffer S."/>
        </authorList>
    </citation>
    <scope>STRUCTURE BY ELECTRON MICROSCOPY (2.80 ANGSTROMS) OF RIBOSOME</scope>
    <scope>SUBCELLULAR LOCATION</scope>
    <scope>SUBUNIT</scope>
</reference>
<reference evidence="36 37" key="13">
    <citation type="journal article" date="2022" name="Science">
        <title>Structure of the mammalian ribosome as it decodes the selenocysteine UGA codon.</title>
        <authorList>
            <person name="Hilal T."/>
            <person name="Killam B.Y."/>
            <person name="Grozdanovic M."/>
            <person name="Dobosz-Bartoszek M."/>
            <person name="Loerke J."/>
            <person name="Buerger J."/>
            <person name="Mielke T."/>
            <person name="Copeland P.R."/>
            <person name="Simonovic M."/>
            <person name="Spahn C.M.T."/>
        </authorList>
    </citation>
    <scope>STRUCTURE BY ELECTRON MICROSCOPY (2.80 ANGSTROMS) OF RIBOSOME</scope>
    <scope>SUBCELLULAR LOCATION</scope>
    <scope>SUBUNIT</scope>
</reference>
<reference evidence="33" key="14">
    <citation type="journal article" date="2023" name="Nature">
        <title>A molecular network of conserved factors keeps ribosomes dormant in the egg.</title>
        <authorList>
            <person name="Leesch F."/>
            <person name="Lorenzo-Orts L."/>
            <person name="Pribitzer C."/>
            <person name="Grishkovskaya I."/>
            <person name="Roehsner J."/>
            <person name="Chugunova A."/>
            <person name="Matzinger M."/>
            <person name="Roitinger E."/>
            <person name="Belacic K."/>
            <person name="Kandolf S."/>
            <person name="Lin T.Y."/>
            <person name="Mechtler K."/>
            <person name="Meinhart A."/>
            <person name="Haselbach D."/>
            <person name="Pauli A."/>
        </authorList>
    </citation>
    <scope>STRUCTURE BY ELECTRON MICROSCOPY (2.30 ANGSTROMS) OF RIBOSOME</scope>
    <scope>SUBCELLULAR LOCATION</scope>
    <scope>SUBUNIT</scope>
</reference>
<evidence type="ECO:0000250" key="1">
    <source>
        <dbReference type="UniProtKB" id="P61927"/>
    </source>
</evidence>
<evidence type="ECO:0000255" key="2"/>
<evidence type="ECO:0000269" key="3">
    <source>
    </source>
</evidence>
<evidence type="ECO:0000269" key="4">
    <source>
    </source>
</evidence>
<evidence type="ECO:0000269" key="5">
    <source>
    </source>
</evidence>
<evidence type="ECO:0000269" key="6">
    <source>
    </source>
</evidence>
<evidence type="ECO:0000269" key="7">
    <source>
    </source>
</evidence>
<evidence type="ECO:0000269" key="8">
    <source>
    </source>
</evidence>
<evidence type="ECO:0000269" key="9">
    <source>
    </source>
</evidence>
<evidence type="ECO:0000269" key="10">
    <source>
    </source>
</evidence>
<evidence type="ECO:0000269" key="11">
    <source>
    </source>
</evidence>
<evidence type="ECO:0000269" key="12">
    <source>
    </source>
</evidence>
<evidence type="ECO:0000269" key="13">
    <source>
    </source>
</evidence>
<evidence type="ECO:0000269" key="14">
    <source>
    </source>
</evidence>
<evidence type="ECO:0000269" key="15">
    <source>
    </source>
</evidence>
<evidence type="ECO:0000305" key="16"/>
<evidence type="ECO:0007744" key="17">
    <source>
        <dbReference type="PDB" id="3JAG"/>
    </source>
</evidence>
<evidence type="ECO:0007744" key="18">
    <source>
        <dbReference type="PDB" id="3JAH"/>
    </source>
</evidence>
<evidence type="ECO:0007744" key="19">
    <source>
        <dbReference type="PDB" id="5LZU"/>
    </source>
</evidence>
<evidence type="ECO:0007744" key="20">
    <source>
        <dbReference type="PDB" id="6D90"/>
    </source>
</evidence>
<evidence type="ECO:0007744" key="21">
    <source>
        <dbReference type="PDB" id="6D9J"/>
    </source>
</evidence>
<evidence type="ECO:0007744" key="22">
    <source>
        <dbReference type="PDB" id="6FTI"/>
    </source>
</evidence>
<evidence type="ECO:0007744" key="23">
    <source>
        <dbReference type="PDB" id="6GZ3"/>
    </source>
</evidence>
<evidence type="ECO:0007744" key="24">
    <source>
        <dbReference type="PDB" id="6HCF"/>
    </source>
</evidence>
<evidence type="ECO:0007744" key="25">
    <source>
        <dbReference type="PDB" id="6HCJ"/>
    </source>
</evidence>
<evidence type="ECO:0007744" key="26">
    <source>
        <dbReference type="PDB" id="6MTB"/>
    </source>
</evidence>
<evidence type="ECO:0007744" key="27">
    <source>
        <dbReference type="PDB" id="6MTC"/>
    </source>
</evidence>
<evidence type="ECO:0007744" key="28">
    <source>
        <dbReference type="PDB" id="6R5Q"/>
    </source>
</evidence>
<evidence type="ECO:0007744" key="29">
    <source>
        <dbReference type="PDB" id="6R6G"/>
    </source>
</evidence>
<evidence type="ECO:0007744" key="30">
    <source>
        <dbReference type="PDB" id="6SGC"/>
    </source>
</evidence>
<evidence type="ECO:0007744" key="31">
    <source>
        <dbReference type="PDB" id="6ZVK"/>
    </source>
</evidence>
<evidence type="ECO:0007744" key="32">
    <source>
        <dbReference type="PDB" id="7A01"/>
    </source>
</evidence>
<evidence type="ECO:0007744" key="33">
    <source>
        <dbReference type="PDB" id="7OYD"/>
    </source>
</evidence>
<evidence type="ECO:0007744" key="34">
    <source>
        <dbReference type="PDB" id="7UCJ"/>
    </source>
</evidence>
<evidence type="ECO:0007744" key="35">
    <source>
        <dbReference type="PDB" id="7UCK"/>
    </source>
</evidence>
<evidence type="ECO:0007744" key="36">
    <source>
        <dbReference type="PDB" id="7ZJW"/>
    </source>
</evidence>
<evidence type="ECO:0007744" key="37">
    <source>
        <dbReference type="PDB" id="7ZJX"/>
    </source>
</evidence>
<name>RL37_RABIT</name>
<keyword id="KW-0002">3D-structure</keyword>
<keyword id="KW-0007">Acetylation</keyword>
<keyword id="KW-0963">Cytoplasm</keyword>
<keyword id="KW-0479">Metal-binding</keyword>
<keyword id="KW-0597">Phosphoprotein</keyword>
<keyword id="KW-1185">Reference proteome</keyword>
<keyword id="KW-0687">Ribonucleoprotein</keyword>
<keyword id="KW-0689">Ribosomal protein</keyword>
<keyword id="KW-0694">RNA-binding</keyword>
<keyword id="KW-0699">rRNA-binding</keyword>
<keyword id="KW-0862">Zinc</keyword>
<keyword id="KW-0863">Zinc-finger</keyword>
<accession>U3KPD5</accession>
<dbReference type="EMBL" id="AAGW02030528">
    <property type="status" value="NOT_ANNOTATED_CDS"/>
    <property type="molecule type" value="Genomic_DNA"/>
</dbReference>
<dbReference type="EMBL" id="AAGW02030529">
    <property type="status" value="NOT_ANNOTATED_CDS"/>
    <property type="molecule type" value="Genomic_DNA"/>
</dbReference>
<dbReference type="RefSeq" id="XP_002714044.1">
    <property type="nucleotide sequence ID" value="XM_002713998.5"/>
</dbReference>
<dbReference type="PDB" id="3JAG">
    <property type="method" value="EM"/>
    <property type="resolution" value="3.65 A"/>
    <property type="chains" value="j=2-87"/>
</dbReference>
<dbReference type="PDB" id="3JAH">
    <property type="method" value="EM"/>
    <property type="resolution" value="3.45 A"/>
    <property type="chains" value="j=2-87"/>
</dbReference>
<dbReference type="PDB" id="3JAI">
    <property type="method" value="EM"/>
    <property type="resolution" value="3.65 A"/>
    <property type="chains" value="j=2-87"/>
</dbReference>
<dbReference type="PDB" id="5LZS">
    <property type="method" value="EM"/>
    <property type="resolution" value="3.31 A"/>
    <property type="chains" value="j=1-97"/>
</dbReference>
<dbReference type="PDB" id="5LZT">
    <property type="method" value="EM"/>
    <property type="resolution" value="3.65 A"/>
    <property type="chains" value="j=1-97"/>
</dbReference>
<dbReference type="PDB" id="5LZU">
    <property type="method" value="EM"/>
    <property type="resolution" value="3.75 A"/>
    <property type="chains" value="j=1-97"/>
</dbReference>
<dbReference type="PDB" id="5LZV">
    <property type="method" value="EM"/>
    <property type="resolution" value="3.35 A"/>
    <property type="chains" value="j=1-97"/>
</dbReference>
<dbReference type="PDB" id="5LZW">
    <property type="method" value="EM"/>
    <property type="resolution" value="3.53 A"/>
    <property type="chains" value="j=1-97"/>
</dbReference>
<dbReference type="PDB" id="5LZX">
    <property type="method" value="EM"/>
    <property type="resolution" value="3.67 A"/>
    <property type="chains" value="j=1-97"/>
</dbReference>
<dbReference type="PDB" id="5LZZ">
    <property type="method" value="EM"/>
    <property type="resolution" value="3.47 A"/>
    <property type="chains" value="j=1-97"/>
</dbReference>
<dbReference type="PDB" id="6D90">
    <property type="method" value="EM"/>
    <property type="resolution" value="3.20 A"/>
    <property type="chains" value="j=1-97"/>
</dbReference>
<dbReference type="PDB" id="6D9J">
    <property type="method" value="EM"/>
    <property type="resolution" value="3.20 A"/>
    <property type="chains" value="j=1-97"/>
</dbReference>
<dbReference type="PDB" id="6FTG">
    <property type="method" value="EM"/>
    <property type="resolution" value="9.10 A"/>
    <property type="chains" value="j=2-87"/>
</dbReference>
<dbReference type="PDB" id="6FTI">
    <property type="method" value="EM"/>
    <property type="resolution" value="4.20 A"/>
    <property type="chains" value="j=2-87"/>
</dbReference>
<dbReference type="PDB" id="6FTJ">
    <property type="method" value="EM"/>
    <property type="resolution" value="4.70 A"/>
    <property type="chains" value="j=2-87"/>
</dbReference>
<dbReference type="PDB" id="6GZ3">
    <property type="method" value="EM"/>
    <property type="resolution" value="3.60 A"/>
    <property type="chains" value="Aj=2-85"/>
</dbReference>
<dbReference type="PDB" id="6HCF">
    <property type="method" value="EM"/>
    <property type="resolution" value="3.90 A"/>
    <property type="chains" value="j3=1-97"/>
</dbReference>
<dbReference type="PDB" id="6HCJ">
    <property type="method" value="EM"/>
    <property type="resolution" value="3.80 A"/>
    <property type="chains" value="j3=1-97"/>
</dbReference>
<dbReference type="PDB" id="6HCM">
    <property type="method" value="EM"/>
    <property type="resolution" value="6.80 A"/>
    <property type="chains" value="j3=1-97"/>
</dbReference>
<dbReference type="PDB" id="6HCQ">
    <property type="method" value="EM"/>
    <property type="resolution" value="6.50 A"/>
    <property type="chains" value="j3=1-97"/>
</dbReference>
<dbReference type="PDB" id="6MTB">
    <property type="method" value="EM"/>
    <property type="resolution" value="3.60 A"/>
    <property type="chains" value="j=2-87"/>
</dbReference>
<dbReference type="PDB" id="6MTC">
    <property type="method" value="EM"/>
    <property type="resolution" value="3.40 A"/>
    <property type="chains" value="j=2-87"/>
</dbReference>
<dbReference type="PDB" id="6MTD">
    <property type="method" value="EM"/>
    <property type="resolution" value="3.30 A"/>
    <property type="chains" value="j=2-87"/>
</dbReference>
<dbReference type="PDB" id="6MTE">
    <property type="method" value="EM"/>
    <property type="resolution" value="3.40 A"/>
    <property type="chains" value="j=2-87"/>
</dbReference>
<dbReference type="PDB" id="6P5I">
    <property type="method" value="EM"/>
    <property type="resolution" value="3.10 A"/>
    <property type="chains" value="Aj=1-97"/>
</dbReference>
<dbReference type="PDB" id="6P5J">
    <property type="method" value="EM"/>
    <property type="resolution" value="3.10 A"/>
    <property type="chains" value="Aj=1-97"/>
</dbReference>
<dbReference type="PDB" id="6P5K">
    <property type="method" value="EM"/>
    <property type="resolution" value="3.10 A"/>
    <property type="chains" value="Aj=1-97"/>
</dbReference>
<dbReference type="PDB" id="6P5N">
    <property type="method" value="EM"/>
    <property type="resolution" value="3.20 A"/>
    <property type="chains" value="Aj=1-97"/>
</dbReference>
<dbReference type="PDB" id="6R5Q">
    <property type="method" value="EM"/>
    <property type="resolution" value="3.00 A"/>
    <property type="chains" value="j=2-87"/>
</dbReference>
<dbReference type="PDB" id="6R6G">
    <property type="method" value="EM"/>
    <property type="resolution" value="3.70 A"/>
    <property type="chains" value="j=2-87"/>
</dbReference>
<dbReference type="PDB" id="6R6P">
    <property type="method" value="EM"/>
    <property type="resolution" value="3.10 A"/>
    <property type="chains" value="j=2-87"/>
</dbReference>
<dbReference type="PDB" id="6R7Q">
    <property type="method" value="EM"/>
    <property type="resolution" value="3.90 A"/>
    <property type="chains" value="j=2-87"/>
</dbReference>
<dbReference type="PDB" id="6SGC">
    <property type="method" value="EM"/>
    <property type="resolution" value="2.80 A"/>
    <property type="chains" value="j2=1-97"/>
</dbReference>
<dbReference type="PDB" id="6T59">
    <property type="method" value="EM"/>
    <property type="resolution" value="3.11 A"/>
    <property type="chains" value="j3=1-97"/>
</dbReference>
<dbReference type="PDB" id="6ZVK">
    <property type="method" value="EM"/>
    <property type="resolution" value="3.49 A"/>
    <property type="chains" value="C2=2-87"/>
</dbReference>
<dbReference type="PDB" id="7A01">
    <property type="method" value="EM"/>
    <property type="resolution" value="3.60 A"/>
    <property type="chains" value="C2=2-87"/>
</dbReference>
<dbReference type="PDB" id="7MDZ">
    <property type="method" value="EM"/>
    <property type="resolution" value="3.20 A"/>
    <property type="chains" value="j=1-97"/>
</dbReference>
<dbReference type="PDB" id="7NFX">
    <property type="method" value="EM"/>
    <property type="resolution" value="3.20 A"/>
    <property type="chains" value="j=1-97"/>
</dbReference>
<dbReference type="PDB" id="7NWG">
    <property type="method" value="EM"/>
    <property type="resolution" value="3.80 A"/>
    <property type="chains" value="j3=1-97"/>
</dbReference>
<dbReference type="PDB" id="7NWH">
    <property type="method" value="EM"/>
    <property type="resolution" value="4.10 A"/>
    <property type="chains" value="j=1-97"/>
</dbReference>
<dbReference type="PDB" id="7NWI">
    <property type="method" value="EM"/>
    <property type="resolution" value="3.13 A"/>
    <property type="chains" value="j=1-97"/>
</dbReference>
<dbReference type="PDB" id="7O7Y">
    <property type="method" value="EM"/>
    <property type="resolution" value="2.20 A"/>
    <property type="chains" value="Bj=1-97"/>
</dbReference>
<dbReference type="PDB" id="7O7Z">
    <property type="method" value="EM"/>
    <property type="resolution" value="2.40 A"/>
    <property type="chains" value="Bj=1-97"/>
</dbReference>
<dbReference type="PDB" id="7O80">
    <property type="method" value="EM"/>
    <property type="resolution" value="2.90 A"/>
    <property type="chains" value="Bj=1-97"/>
</dbReference>
<dbReference type="PDB" id="7O81">
    <property type="method" value="EM"/>
    <property type="resolution" value="3.10 A"/>
    <property type="chains" value="Bj=1-97"/>
</dbReference>
<dbReference type="PDB" id="7OBR">
    <property type="method" value="EM"/>
    <property type="resolution" value="2.80 A"/>
    <property type="chains" value="j=1-97"/>
</dbReference>
<dbReference type="PDB" id="7OYD">
    <property type="method" value="EM"/>
    <property type="resolution" value="2.30 A"/>
    <property type="chains" value="j=1-97"/>
</dbReference>
<dbReference type="PDB" id="7QWQ">
    <property type="method" value="EM"/>
    <property type="resolution" value="2.83 A"/>
    <property type="chains" value="j=1-97"/>
</dbReference>
<dbReference type="PDB" id="7QWR">
    <property type="method" value="EM"/>
    <property type="resolution" value="2.90 A"/>
    <property type="chains" value="j=1-97"/>
</dbReference>
<dbReference type="PDB" id="7QWS">
    <property type="method" value="EM"/>
    <property type="resolution" value="3.40 A"/>
    <property type="chains" value="j=1-97"/>
</dbReference>
<dbReference type="PDB" id="7TM3">
    <property type="method" value="EM"/>
    <property type="resolution" value="3.25 A"/>
    <property type="chains" value="j=1-97"/>
</dbReference>
<dbReference type="PDB" id="7TOQ">
    <property type="method" value="EM"/>
    <property type="resolution" value="3.10 A"/>
    <property type="chains" value="AL37=2-87"/>
</dbReference>
<dbReference type="PDB" id="7TOR">
    <property type="method" value="EM"/>
    <property type="resolution" value="2.90 A"/>
    <property type="chains" value="AL37=2-87"/>
</dbReference>
<dbReference type="PDB" id="7TUT">
    <property type="method" value="EM"/>
    <property type="resolution" value="3.88 A"/>
    <property type="chains" value="j=1-97"/>
</dbReference>
<dbReference type="PDB" id="7UCJ">
    <property type="method" value="EM"/>
    <property type="resolution" value="3.10 A"/>
    <property type="chains" value="j=2-87"/>
</dbReference>
<dbReference type="PDB" id="7UCK">
    <property type="method" value="EM"/>
    <property type="resolution" value="2.80 A"/>
    <property type="chains" value="j=2-87"/>
</dbReference>
<dbReference type="PDB" id="7ZJW">
    <property type="method" value="EM"/>
    <property type="resolution" value="2.80 A"/>
    <property type="chains" value="Lm=1-97"/>
</dbReference>
<dbReference type="PDB" id="7ZJX">
    <property type="method" value="EM"/>
    <property type="resolution" value="3.10 A"/>
    <property type="chains" value="Lm=1-97"/>
</dbReference>
<dbReference type="PDB" id="8B5L">
    <property type="method" value="EM"/>
    <property type="resolution" value="2.86 A"/>
    <property type="chains" value="j=2-87"/>
</dbReference>
<dbReference type="PDB" id="8B6C">
    <property type="method" value="EM"/>
    <property type="resolution" value="2.79 A"/>
    <property type="chains" value="j=2-87"/>
</dbReference>
<dbReference type="PDB" id="8BHF">
    <property type="method" value="EM"/>
    <property type="resolution" value="3.10 A"/>
    <property type="chains" value="W1=2-87"/>
</dbReference>
<dbReference type="PDB" id="8BPO">
    <property type="method" value="EM"/>
    <property type="resolution" value="2.80 A"/>
    <property type="chains" value="i2=1-97"/>
</dbReference>
<dbReference type="PDB" id="8BTK">
    <property type="method" value="EM"/>
    <property type="resolution" value="3.50 A"/>
    <property type="chains" value="Bj=1-97"/>
</dbReference>
<dbReference type="PDB" id="8P2K">
    <property type="method" value="EM"/>
    <property type="resolution" value="2.90 A"/>
    <property type="chains" value="Bj=1-97"/>
</dbReference>
<dbReference type="PDB" id="8RJB">
    <property type="method" value="EM"/>
    <property type="resolution" value="2.69 A"/>
    <property type="chains" value="j=1-97"/>
</dbReference>
<dbReference type="PDB" id="8RJC">
    <property type="method" value="EM"/>
    <property type="resolution" value="2.90 A"/>
    <property type="chains" value="j=1-97"/>
</dbReference>
<dbReference type="PDB" id="8RJD">
    <property type="method" value="EM"/>
    <property type="resolution" value="2.79 A"/>
    <property type="chains" value="j=1-97"/>
</dbReference>
<dbReference type="PDB" id="8SCB">
    <property type="method" value="EM"/>
    <property type="resolution" value="2.50 A"/>
    <property type="chains" value="j=1-97"/>
</dbReference>
<dbReference type="PDB" id="8VFT">
    <property type="method" value="EM"/>
    <property type="resolution" value="3.30 A"/>
    <property type="chains" value="j=1-97"/>
</dbReference>
<dbReference type="PDB" id="9BDL">
    <property type="method" value="EM"/>
    <property type="resolution" value="2.80 A"/>
    <property type="chains" value="AL37=2-87"/>
</dbReference>
<dbReference type="PDB" id="9BDN">
    <property type="method" value="EM"/>
    <property type="resolution" value="3.10 A"/>
    <property type="chains" value="AL37=2-87"/>
</dbReference>
<dbReference type="PDB" id="9BDP">
    <property type="method" value="EM"/>
    <property type="resolution" value="3.70 A"/>
    <property type="chains" value="AL37=2-87"/>
</dbReference>
<dbReference type="PDB" id="9F1B">
    <property type="method" value="EM"/>
    <property type="resolution" value="3.01 A"/>
    <property type="chains" value="Bj=1-97"/>
</dbReference>
<dbReference type="PDB" id="9F1C">
    <property type="method" value="EM"/>
    <property type="resolution" value="3.78 A"/>
    <property type="chains" value="Bj=1-97"/>
</dbReference>
<dbReference type="PDB" id="9F1D">
    <property type="method" value="EM"/>
    <property type="resolution" value="3.26 A"/>
    <property type="chains" value="Bj=1-97"/>
</dbReference>
<dbReference type="PDBsum" id="3JAG"/>
<dbReference type="PDBsum" id="3JAH"/>
<dbReference type="PDBsum" id="3JAI"/>
<dbReference type="PDBsum" id="5LZS"/>
<dbReference type="PDBsum" id="5LZT"/>
<dbReference type="PDBsum" id="5LZU"/>
<dbReference type="PDBsum" id="5LZV"/>
<dbReference type="PDBsum" id="5LZW"/>
<dbReference type="PDBsum" id="5LZX"/>
<dbReference type="PDBsum" id="5LZZ"/>
<dbReference type="PDBsum" id="6D90"/>
<dbReference type="PDBsum" id="6D9J"/>
<dbReference type="PDBsum" id="6FTG"/>
<dbReference type="PDBsum" id="6FTI"/>
<dbReference type="PDBsum" id="6FTJ"/>
<dbReference type="PDBsum" id="6GZ3"/>
<dbReference type="PDBsum" id="6HCF"/>
<dbReference type="PDBsum" id="6HCJ"/>
<dbReference type="PDBsum" id="6HCM"/>
<dbReference type="PDBsum" id="6HCQ"/>
<dbReference type="PDBsum" id="6MTB"/>
<dbReference type="PDBsum" id="6MTC"/>
<dbReference type="PDBsum" id="6MTD"/>
<dbReference type="PDBsum" id="6MTE"/>
<dbReference type="PDBsum" id="6P5I"/>
<dbReference type="PDBsum" id="6P5J"/>
<dbReference type="PDBsum" id="6P5K"/>
<dbReference type="PDBsum" id="6P5N"/>
<dbReference type="PDBsum" id="6R5Q"/>
<dbReference type="PDBsum" id="6R6G"/>
<dbReference type="PDBsum" id="6R6P"/>
<dbReference type="PDBsum" id="6R7Q"/>
<dbReference type="PDBsum" id="6SGC"/>
<dbReference type="PDBsum" id="6T59"/>
<dbReference type="PDBsum" id="6ZVK"/>
<dbReference type="PDBsum" id="7A01"/>
<dbReference type="PDBsum" id="7MDZ"/>
<dbReference type="PDBsum" id="7NFX"/>
<dbReference type="PDBsum" id="7NWG"/>
<dbReference type="PDBsum" id="7NWH"/>
<dbReference type="PDBsum" id="7NWI"/>
<dbReference type="PDBsum" id="7O7Y"/>
<dbReference type="PDBsum" id="7O7Z"/>
<dbReference type="PDBsum" id="7O80"/>
<dbReference type="PDBsum" id="7O81"/>
<dbReference type="PDBsum" id="7OBR"/>
<dbReference type="PDBsum" id="7OYD"/>
<dbReference type="PDBsum" id="7QWQ"/>
<dbReference type="PDBsum" id="7QWR"/>
<dbReference type="PDBsum" id="7QWS"/>
<dbReference type="PDBsum" id="7TM3"/>
<dbReference type="PDBsum" id="7TOQ"/>
<dbReference type="PDBsum" id="7TOR"/>
<dbReference type="PDBsum" id="7TUT"/>
<dbReference type="PDBsum" id="7UCJ"/>
<dbReference type="PDBsum" id="7UCK"/>
<dbReference type="PDBsum" id="7ZJW"/>
<dbReference type="PDBsum" id="7ZJX"/>
<dbReference type="PDBsum" id="8B5L"/>
<dbReference type="PDBsum" id="8B6C"/>
<dbReference type="PDBsum" id="8BHF"/>
<dbReference type="PDBsum" id="8BPO"/>
<dbReference type="PDBsum" id="8BTK"/>
<dbReference type="PDBsum" id="8P2K"/>
<dbReference type="PDBsum" id="8RJB"/>
<dbReference type="PDBsum" id="8RJC"/>
<dbReference type="PDBsum" id="8RJD"/>
<dbReference type="PDBsum" id="8SCB"/>
<dbReference type="PDBsum" id="8VFT"/>
<dbReference type="PDBsum" id="9BDL"/>
<dbReference type="PDBsum" id="9BDN"/>
<dbReference type="PDBsum" id="9BDP"/>
<dbReference type="PDBsum" id="9F1B"/>
<dbReference type="PDBsum" id="9F1C"/>
<dbReference type="PDBsum" id="9F1D"/>
<dbReference type="EMDB" id="EMD-0098"/>
<dbReference type="EMDB" id="EMD-0099"/>
<dbReference type="EMDB" id="EMD-0100"/>
<dbReference type="EMDB" id="EMD-0192"/>
<dbReference type="EMDB" id="EMD-0194"/>
<dbReference type="EMDB" id="EMD-0195"/>
<dbReference type="EMDB" id="EMD-0197"/>
<dbReference type="EMDB" id="EMD-10181"/>
<dbReference type="EMDB" id="EMD-10380"/>
<dbReference type="EMDB" id="EMD-11459"/>
<dbReference type="EMDB" id="EMD-11590"/>
<dbReference type="EMDB" id="EMD-12303"/>
<dbReference type="EMDB" id="EMD-12631"/>
<dbReference type="EMDB" id="EMD-12632"/>
<dbReference type="EMDB" id="EMD-12633"/>
<dbReference type="EMDB" id="EMD-12756"/>
<dbReference type="EMDB" id="EMD-12757"/>
<dbReference type="EMDB" id="EMD-12758"/>
<dbReference type="EMDB" id="EMD-12759"/>
<dbReference type="EMDB" id="EMD-12801"/>
<dbReference type="EMDB" id="EMD-13114"/>
<dbReference type="EMDB" id="EMD-14191"/>
<dbReference type="EMDB" id="EMD-14192"/>
<dbReference type="EMDB" id="EMD-14193"/>
<dbReference type="EMDB" id="EMD-14751"/>
<dbReference type="EMDB" id="EMD-14752"/>
<dbReference type="EMDB" id="EMD-15860"/>
<dbReference type="EMDB" id="EMD-15863"/>
<dbReference type="EMDB" id="EMD-16052"/>
<dbReference type="EMDB" id="EMD-16155"/>
<dbReference type="EMDB" id="EMD-16232"/>
<dbReference type="EMDB" id="EMD-17367"/>
<dbReference type="EMDB" id="EMD-19195"/>
<dbReference type="EMDB" id="EMD-19197"/>
<dbReference type="EMDB" id="EMD-19198"/>
<dbReference type="EMDB" id="EMD-20255"/>
<dbReference type="EMDB" id="EMD-20256"/>
<dbReference type="EMDB" id="EMD-20257"/>
<dbReference type="EMDB" id="EMD-20258"/>
<dbReference type="EMDB" id="EMD-23785"/>
<dbReference type="EMDB" id="EMD-25994"/>
<dbReference type="EMDB" id="EMD-26035"/>
<dbReference type="EMDB" id="EMD-26036"/>
<dbReference type="EMDB" id="EMD-26133"/>
<dbReference type="EMDB" id="EMD-26444"/>
<dbReference type="EMDB" id="EMD-26445"/>
<dbReference type="EMDB" id="EMD-40344"/>
<dbReference type="EMDB" id="EMD-4130"/>
<dbReference type="EMDB" id="EMD-4131"/>
<dbReference type="EMDB" id="EMD-4132"/>
<dbReference type="EMDB" id="EMD-4133"/>
<dbReference type="EMDB" id="EMD-4134"/>
<dbReference type="EMDB" id="EMD-4135"/>
<dbReference type="EMDB" id="EMD-4136"/>
<dbReference type="EMDB" id="EMD-4137"/>
<dbReference type="EMDB" id="EMD-4300"/>
<dbReference type="EMDB" id="EMD-4315"/>
<dbReference type="EMDB" id="EMD-4316"/>
<dbReference type="EMDB" id="EMD-4317"/>
<dbReference type="EMDB" id="EMD-43189"/>
<dbReference type="EMDB" id="EMD-44461"/>
<dbReference type="EMDB" id="EMD-44463"/>
<dbReference type="EMDB" id="EMD-44464"/>
<dbReference type="EMDB" id="EMD-4729"/>
<dbReference type="EMDB" id="EMD-4735"/>
<dbReference type="EMDB" id="EMD-4737"/>
<dbReference type="EMDB" id="EMD-4745"/>
<dbReference type="EMDB" id="EMD-50124"/>
<dbReference type="EMDB" id="EMD-50125"/>
<dbReference type="EMDB" id="EMD-50126"/>
<dbReference type="EMDB" id="EMD-7834"/>
<dbReference type="EMDB" id="EMD-7836"/>
<dbReference type="EMDB" id="EMD-9237"/>
<dbReference type="EMDB" id="EMD-9239"/>
<dbReference type="EMDB" id="EMD-9240"/>
<dbReference type="EMDB" id="EMD-9242"/>
<dbReference type="SMR" id="U3KPD5"/>
<dbReference type="FunCoup" id="U3KPD5">
    <property type="interactions" value="251"/>
</dbReference>
<dbReference type="IntAct" id="U3KPD5">
    <property type="interactions" value="1"/>
</dbReference>
<dbReference type="STRING" id="9986.ENSOCUP00000028035"/>
<dbReference type="PaxDb" id="9986-ENSOCUP00000027095"/>
<dbReference type="Ensembl" id="ENSOCUT00000034046.2">
    <property type="protein sequence ID" value="ENSOCUP00000027095.1"/>
    <property type="gene ID" value="ENSOCUG00000029674.2"/>
</dbReference>
<dbReference type="Ensembl" id="ENSOCUT00000046384.1">
    <property type="protein sequence ID" value="ENSOCUP00000028035.1"/>
    <property type="gene ID" value="ENSOCUG00000029674.2"/>
</dbReference>
<dbReference type="GeneID" id="100355049"/>
<dbReference type="KEGG" id="ocu:100355049"/>
<dbReference type="CTD" id="6167"/>
<dbReference type="eggNOG" id="KOG3475">
    <property type="taxonomic scope" value="Eukaryota"/>
</dbReference>
<dbReference type="GeneTree" id="ENSGT00390000005254"/>
<dbReference type="HOGENOM" id="CLU_150908_0_0_1"/>
<dbReference type="OMA" id="RMAYLKH"/>
<dbReference type="OrthoDB" id="10259236at2759"/>
<dbReference type="Proteomes" id="UP000001811">
    <property type="component" value="Chromosome 11"/>
</dbReference>
<dbReference type="Bgee" id="ENSOCUG00000029674">
    <property type="expression patterns" value="Expressed in autopod skin and 16 other cell types or tissues"/>
</dbReference>
<dbReference type="GO" id="GO:0022625">
    <property type="term" value="C:cytosolic large ribosomal subunit"/>
    <property type="evidence" value="ECO:0007669"/>
    <property type="project" value="Ensembl"/>
</dbReference>
<dbReference type="GO" id="GO:0045202">
    <property type="term" value="C:synapse"/>
    <property type="evidence" value="ECO:0007669"/>
    <property type="project" value="Ensembl"/>
</dbReference>
<dbReference type="GO" id="GO:0097371">
    <property type="term" value="F:MDM2/MDM4 family protein binding"/>
    <property type="evidence" value="ECO:0007669"/>
    <property type="project" value="Ensembl"/>
</dbReference>
<dbReference type="GO" id="GO:0019843">
    <property type="term" value="F:rRNA binding"/>
    <property type="evidence" value="ECO:0007669"/>
    <property type="project" value="UniProtKB-KW"/>
</dbReference>
<dbReference type="GO" id="GO:0003735">
    <property type="term" value="F:structural constituent of ribosome"/>
    <property type="evidence" value="ECO:0007669"/>
    <property type="project" value="Ensembl"/>
</dbReference>
<dbReference type="GO" id="GO:1990948">
    <property type="term" value="F:ubiquitin ligase inhibitor activity"/>
    <property type="evidence" value="ECO:0007669"/>
    <property type="project" value="Ensembl"/>
</dbReference>
<dbReference type="GO" id="GO:0008270">
    <property type="term" value="F:zinc ion binding"/>
    <property type="evidence" value="ECO:0007669"/>
    <property type="project" value="UniProtKB-KW"/>
</dbReference>
<dbReference type="GO" id="GO:1901798">
    <property type="term" value="P:positive regulation of signal transduction by p53 class mediator"/>
    <property type="evidence" value="ECO:0007669"/>
    <property type="project" value="Ensembl"/>
</dbReference>
<dbReference type="GO" id="GO:0006412">
    <property type="term" value="P:translation"/>
    <property type="evidence" value="ECO:0007669"/>
    <property type="project" value="InterPro"/>
</dbReference>
<dbReference type="FunFam" id="2.20.25.30:FF:000001">
    <property type="entry name" value="Ribosomal protein L37"/>
    <property type="match status" value="1"/>
</dbReference>
<dbReference type="Gene3D" id="2.20.25.30">
    <property type="match status" value="1"/>
</dbReference>
<dbReference type="HAMAP" id="MF_00547">
    <property type="entry name" value="Ribosomal_eL37"/>
    <property type="match status" value="1"/>
</dbReference>
<dbReference type="InterPro" id="IPR001569">
    <property type="entry name" value="Ribosomal_eL37"/>
</dbReference>
<dbReference type="InterPro" id="IPR011331">
    <property type="entry name" value="Ribosomal_eL37/eL43"/>
</dbReference>
<dbReference type="InterPro" id="IPR018267">
    <property type="entry name" value="Ribosomal_eL37_CS"/>
</dbReference>
<dbReference type="InterPro" id="IPR011332">
    <property type="entry name" value="Ribosomal_zn-bd"/>
</dbReference>
<dbReference type="PANTHER" id="PTHR10768">
    <property type="entry name" value="60S RIBOSOMAL PROTEIN L37"/>
    <property type="match status" value="1"/>
</dbReference>
<dbReference type="PANTHER" id="PTHR10768:SF22">
    <property type="entry name" value="LARGE RIBOSOMAL SUBUNIT PROTEIN EL37"/>
    <property type="match status" value="1"/>
</dbReference>
<dbReference type="Pfam" id="PF01907">
    <property type="entry name" value="Ribosomal_L37e"/>
    <property type="match status" value="1"/>
</dbReference>
<dbReference type="SUPFAM" id="SSF57829">
    <property type="entry name" value="Zn-binding ribosomal proteins"/>
    <property type="match status" value="1"/>
</dbReference>
<dbReference type="PROSITE" id="PS01077">
    <property type="entry name" value="RIBOSOMAL_L37E"/>
    <property type="match status" value="1"/>
</dbReference>
<organism>
    <name type="scientific">Oryctolagus cuniculus</name>
    <name type="common">Rabbit</name>
    <dbReference type="NCBI Taxonomy" id="9986"/>
    <lineage>
        <taxon>Eukaryota</taxon>
        <taxon>Metazoa</taxon>
        <taxon>Chordata</taxon>
        <taxon>Craniata</taxon>
        <taxon>Vertebrata</taxon>
        <taxon>Euteleostomi</taxon>
        <taxon>Mammalia</taxon>
        <taxon>Eutheria</taxon>
        <taxon>Euarchontoglires</taxon>
        <taxon>Glires</taxon>
        <taxon>Lagomorpha</taxon>
        <taxon>Leporidae</taxon>
        <taxon>Oryctolagus</taxon>
    </lineage>
</organism>
<sequence>MTKGTSSFGKRRNKTHTLCRRCGSKAYHLQKSTCGKCGYPAKRKRKYNWSAKAKRRNTTGTGRMRHLKIVYRRFRHGFREGTTPKPKRAAVAASSSS</sequence>